<dbReference type="EMBL" id="CR382122">
    <property type="protein sequence ID" value="CAH02373.2"/>
    <property type="molecule type" value="Genomic_DNA"/>
</dbReference>
<dbReference type="RefSeq" id="XP_451980.2">
    <property type="nucleotide sequence ID" value="XM_451980.2"/>
</dbReference>
<dbReference type="PDB" id="3ZXU">
    <property type="method" value="X-ray"/>
    <property type="resolution" value="3.90 A"/>
    <property type="chains" value="A/C=1-293"/>
</dbReference>
<dbReference type="PDB" id="5MU3">
    <property type="method" value="X-ray"/>
    <property type="resolution" value="2.10 A"/>
    <property type="chains" value="A/D=108-293"/>
</dbReference>
<dbReference type="PDBsum" id="3ZXU"/>
<dbReference type="PDBsum" id="5MU3"/>
<dbReference type="SMR" id="Q6CVQ9"/>
<dbReference type="FunCoup" id="Q6CVQ9">
    <property type="interactions" value="95"/>
</dbReference>
<dbReference type="IntAct" id="Q6CVQ9">
    <property type="interactions" value="3"/>
</dbReference>
<dbReference type="MINT" id="Q6CVQ9"/>
<dbReference type="STRING" id="284590.Q6CVQ9"/>
<dbReference type="PaxDb" id="284590-Q6CVQ9"/>
<dbReference type="KEGG" id="kla:KLLA0_B10142g"/>
<dbReference type="eggNOG" id="ENOG502RXWX">
    <property type="taxonomic scope" value="Eukaryota"/>
</dbReference>
<dbReference type="HOGENOM" id="CLU_068734_0_0_1"/>
<dbReference type="InParanoid" id="Q6CVQ9"/>
<dbReference type="EvolutionaryTrace" id="Q6CVQ9"/>
<dbReference type="Proteomes" id="UP000000598">
    <property type="component" value="Chromosome B"/>
</dbReference>
<dbReference type="GO" id="GO:0000776">
    <property type="term" value="C:kinetochore"/>
    <property type="evidence" value="ECO:0007669"/>
    <property type="project" value="UniProtKB-KW"/>
</dbReference>
<dbReference type="GO" id="GO:0005634">
    <property type="term" value="C:nucleus"/>
    <property type="evidence" value="ECO:0007669"/>
    <property type="project" value="UniProtKB-SubCell"/>
</dbReference>
<dbReference type="GO" id="GO:0051301">
    <property type="term" value="P:cell division"/>
    <property type="evidence" value="ECO:0007669"/>
    <property type="project" value="UniProtKB-KW"/>
</dbReference>
<dbReference type="GO" id="GO:0034508">
    <property type="term" value="P:centromere complex assembly"/>
    <property type="evidence" value="ECO:0007669"/>
    <property type="project" value="InterPro"/>
</dbReference>
<dbReference type="GO" id="GO:0051321">
    <property type="term" value="P:meiotic cell cycle"/>
    <property type="evidence" value="ECO:0007669"/>
    <property type="project" value="UniProtKB-KW"/>
</dbReference>
<dbReference type="CDD" id="cd23834">
    <property type="entry name" value="DRWD-C_Mcm21"/>
    <property type="match status" value="1"/>
</dbReference>
<dbReference type="CDD" id="cd23830">
    <property type="entry name" value="DRWD-N_Mcm21"/>
    <property type="match status" value="1"/>
</dbReference>
<dbReference type="InterPro" id="IPR018464">
    <property type="entry name" value="CENP-O"/>
</dbReference>
<dbReference type="Pfam" id="PF09496">
    <property type="entry name" value="CENP-O"/>
    <property type="match status" value="1"/>
</dbReference>
<organism>
    <name type="scientific">Kluyveromyces lactis (strain ATCC 8585 / CBS 2359 / DSM 70799 / NBRC 1267 / NRRL Y-1140 / WM37)</name>
    <name type="common">Yeast</name>
    <name type="synonym">Candida sphaerica</name>
    <dbReference type="NCBI Taxonomy" id="284590"/>
    <lineage>
        <taxon>Eukaryota</taxon>
        <taxon>Fungi</taxon>
        <taxon>Dikarya</taxon>
        <taxon>Ascomycota</taxon>
        <taxon>Saccharomycotina</taxon>
        <taxon>Saccharomycetes</taxon>
        <taxon>Saccharomycetales</taxon>
        <taxon>Saccharomycetaceae</taxon>
        <taxon>Kluyveromyces</taxon>
    </lineage>
</organism>
<comment type="function">
    <text evidence="1 4">Component of the kinetochore, a multiprotein complex that assembles on centromeric DNA and attaches chromosomes to spindle microtubules, mediating chromosome segregation and sister chromatid segregation during meiosis and mitosis (By similarity). Component of the inner kinetochore COMA subcomplex, which connects centromere-associated proteins and the outer kinetochore (PubMed:29046335). COMA interacts with other inner kinetochore proteins to form the inner kinetochore constitutive centromere-associated network (CCAN), which serves as a structural platform for outer kinetochore assembly (By similarity).</text>
</comment>
<comment type="subunit">
    <text evidence="1 3 4">Component of the heterotetrameric kinetochore subcomplex COMA, which consists of AME1, CTF19, MCM21 and OKP1 (PubMed:22322944, PubMed:29046335). The COMA subcomplex is part of a larger constitutive centromere-associated network (CCAN) (also known as central kinetochore CTF19 complex in yeast), which is composed of at least AME1, CHL4, CTF3, CTF19, IML3, MCM16, MCM21, MCM22, NKP1, NKP2 and OKP1 (By similarity). COMA binds the centromeric nucleosome-binding protein MIF2, and to the outer kinetochore MIND subcomplex (PubMed:29046335).</text>
</comment>
<comment type="interaction">
    <interactant intactId="EBI-7692022">
        <id>Q6CVQ9</id>
    </interactant>
    <interactant intactId="EBI-7692007">
        <id>Q6CRN7</id>
        <label>CTF19</label>
    </interactant>
    <organismsDiffer>false</organismsDiffer>
    <experiments>3</experiments>
</comment>
<comment type="subcellular location">
    <subcellularLocation>
        <location evidence="1">Nucleus</location>
    </subcellularLocation>
    <subcellularLocation>
        <location evidence="1">Chromosome</location>
        <location evidence="1">Centromere</location>
        <location evidence="1">Kinetochore</location>
    </subcellularLocation>
</comment>
<comment type="domain">
    <text evidence="3">The D-RWD region contains a double-RWD domain which is involved in the interaction with other kinetochore proteins.</text>
</comment>
<comment type="similarity">
    <text evidence="5">Belongs to the CENP-O/MCM21 family.</text>
</comment>
<keyword id="KW-0002">3D-structure</keyword>
<keyword id="KW-0131">Cell cycle</keyword>
<keyword id="KW-0132">Cell division</keyword>
<keyword id="KW-0137">Centromere</keyword>
<keyword id="KW-0158">Chromosome</keyword>
<keyword id="KW-0175">Coiled coil</keyword>
<keyword id="KW-0995">Kinetochore</keyword>
<keyword id="KW-0469">Meiosis</keyword>
<keyword id="KW-0498">Mitosis</keyword>
<keyword id="KW-0539">Nucleus</keyword>
<keyword id="KW-1185">Reference proteome</keyword>
<name>CENPO_KLULA</name>
<accession>Q6CVQ9</accession>
<gene>
    <name type="primary">MCM21</name>
    <name type="ordered locus">KLLA0B10142g</name>
</gene>
<feature type="chain" id="PRO_0000417589" description="Inner kinetochore subunit MCM21">
    <location>
        <begin position="1"/>
        <end position="293"/>
    </location>
</feature>
<feature type="region of interest" description="D-RWD">
    <location>
        <begin position="107"/>
        <end position="293"/>
    </location>
</feature>
<feature type="coiled-coil region" evidence="2">
    <location>
        <begin position="1"/>
        <end position="31"/>
    </location>
</feature>
<feature type="helix" evidence="6">
    <location>
        <begin position="109"/>
        <end position="118"/>
    </location>
</feature>
<feature type="strand" evidence="6">
    <location>
        <begin position="121"/>
        <end position="129"/>
    </location>
</feature>
<feature type="strand" evidence="6">
    <location>
        <begin position="132"/>
        <end position="139"/>
    </location>
</feature>
<feature type="turn" evidence="6">
    <location>
        <begin position="144"/>
        <end position="147"/>
    </location>
</feature>
<feature type="strand" evidence="6">
    <location>
        <begin position="153"/>
        <end position="159"/>
    </location>
</feature>
<feature type="strand" evidence="6">
    <location>
        <begin position="161"/>
        <end position="163"/>
    </location>
</feature>
<feature type="strand" evidence="6">
    <location>
        <begin position="167"/>
        <end position="172"/>
    </location>
</feature>
<feature type="helix" evidence="6">
    <location>
        <begin position="180"/>
        <end position="188"/>
    </location>
</feature>
<feature type="turn" evidence="6">
    <location>
        <begin position="189"/>
        <end position="191"/>
    </location>
</feature>
<feature type="helix" evidence="6">
    <location>
        <begin position="195"/>
        <end position="221"/>
    </location>
</feature>
<feature type="turn" evidence="6">
    <location>
        <begin position="222"/>
        <end position="224"/>
    </location>
</feature>
<feature type="strand" evidence="6">
    <location>
        <begin position="230"/>
        <end position="237"/>
    </location>
</feature>
<feature type="strand" evidence="6">
    <location>
        <begin position="243"/>
        <end position="248"/>
    </location>
</feature>
<feature type="strand" evidence="6">
    <location>
        <begin position="251"/>
        <end position="258"/>
    </location>
</feature>
<feature type="turn" evidence="6">
    <location>
        <begin position="259"/>
        <end position="262"/>
    </location>
</feature>
<feature type="strand" evidence="6">
    <location>
        <begin position="263"/>
        <end position="269"/>
    </location>
</feature>
<feature type="helix" evidence="6">
    <location>
        <begin position="281"/>
        <end position="286"/>
    </location>
</feature>
<feature type="turn" evidence="6">
    <location>
        <begin position="287"/>
        <end position="289"/>
    </location>
</feature>
<sequence length="293" mass="33521">MEETEAVQQDIEALEREIQTIKIQIANAHSGASKDEVKIPDAYKQFLSENINFSNLMRKDENTTLSINLSPRKPGTTTGQIQGIDSSIRSNFGVSSGHNEVAGFKSITDFVQWENSVRLIGVSLFPVNYDNIEFMGIRLELFDELSLKYDPPFYVILKPSVKRLGIWELFKHNLPKYINIHQHWQLITKDTDTSDSNIMKFANLCYKDLLKVHSRVQFFRKLEGNYVNDKQYSLLHIDNMGLNVSFRLGADIIKIKVDDGDDEIIDCTFNGEKNISLLGSIYGITNRFQSIIM</sequence>
<evidence type="ECO:0000250" key="1">
    <source>
        <dbReference type="UniProtKB" id="Q06675"/>
    </source>
</evidence>
<evidence type="ECO:0000255" key="2"/>
<evidence type="ECO:0000269" key="3">
    <source>
    </source>
</evidence>
<evidence type="ECO:0000269" key="4">
    <source>
    </source>
</evidence>
<evidence type="ECO:0000305" key="5"/>
<evidence type="ECO:0007829" key="6">
    <source>
        <dbReference type="PDB" id="5MU3"/>
    </source>
</evidence>
<reference key="1">
    <citation type="journal article" date="2004" name="Nature">
        <title>Genome evolution in yeasts.</title>
        <authorList>
            <person name="Dujon B."/>
            <person name="Sherman D."/>
            <person name="Fischer G."/>
            <person name="Durrens P."/>
            <person name="Casaregola S."/>
            <person name="Lafontaine I."/>
            <person name="de Montigny J."/>
            <person name="Marck C."/>
            <person name="Neuveglise C."/>
            <person name="Talla E."/>
            <person name="Goffard N."/>
            <person name="Frangeul L."/>
            <person name="Aigle M."/>
            <person name="Anthouard V."/>
            <person name="Babour A."/>
            <person name="Barbe V."/>
            <person name="Barnay S."/>
            <person name="Blanchin S."/>
            <person name="Beckerich J.-M."/>
            <person name="Beyne E."/>
            <person name="Bleykasten C."/>
            <person name="Boisrame A."/>
            <person name="Boyer J."/>
            <person name="Cattolico L."/>
            <person name="Confanioleri F."/>
            <person name="de Daruvar A."/>
            <person name="Despons L."/>
            <person name="Fabre E."/>
            <person name="Fairhead C."/>
            <person name="Ferry-Dumazet H."/>
            <person name="Groppi A."/>
            <person name="Hantraye F."/>
            <person name="Hennequin C."/>
            <person name="Jauniaux N."/>
            <person name="Joyet P."/>
            <person name="Kachouri R."/>
            <person name="Kerrest A."/>
            <person name="Koszul R."/>
            <person name="Lemaire M."/>
            <person name="Lesur I."/>
            <person name="Ma L."/>
            <person name="Muller H."/>
            <person name="Nicaud J.-M."/>
            <person name="Nikolski M."/>
            <person name="Oztas S."/>
            <person name="Ozier-Kalogeropoulos O."/>
            <person name="Pellenz S."/>
            <person name="Potier S."/>
            <person name="Richard G.-F."/>
            <person name="Straub M.-L."/>
            <person name="Suleau A."/>
            <person name="Swennen D."/>
            <person name="Tekaia F."/>
            <person name="Wesolowski-Louvel M."/>
            <person name="Westhof E."/>
            <person name="Wirth B."/>
            <person name="Zeniou-Meyer M."/>
            <person name="Zivanovic Y."/>
            <person name="Bolotin-Fukuhara M."/>
            <person name="Thierry A."/>
            <person name="Bouchier C."/>
            <person name="Caudron B."/>
            <person name="Scarpelli C."/>
            <person name="Gaillardin C."/>
            <person name="Weissenbach J."/>
            <person name="Wincker P."/>
            <person name="Souciet J.-L."/>
        </authorList>
    </citation>
    <scope>NUCLEOTIDE SEQUENCE [LARGE SCALE GENOMIC DNA]</scope>
    <source>
        <strain>ATCC 8585 / CBS 2359 / DSM 70799 / NBRC 1267 / NRRL Y-1140 / WM37</strain>
    </source>
</reference>
<reference key="2">
    <citation type="journal article" date="2012" name="EMBO Rep.">
        <title>RWD domain: a recurring module in kinetochore architecture shown by a Ctf19-Mcm21 complex structure.</title>
        <authorList>
            <person name="Schmitzberger F."/>
            <person name="Harrison S.C."/>
        </authorList>
    </citation>
    <scope>X-RAY CRYSTALLOGRAPHY (3.7 ANGSTROMS) IN COMPLEX WITH CTF19</scope>
    <scope>DOMAIN</scope>
    <scope>INTERACTION WITH AME1 AND OKP1</scope>
</reference>
<reference key="3">
    <citation type="journal article" date="2017" name="EMBO J.">
        <title>Molecular basis for inner kinetochore configuration through RWD domain-peptide interactions.</title>
        <authorList>
            <person name="Schmitzberger F."/>
            <person name="Richter M.M."/>
            <person name="Gordiyenko Y."/>
            <person name="Robinson C.V."/>
            <person name="Dadlez M."/>
            <person name="Westermann S."/>
        </authorList>
    </citation>
    <scope>X-RAY CRYSTALLOGRAPHY (2.10 ANGSTROMS) OF 108-293 IN COMPLEX WITH CTF19 AND OKP1</scope>
    <scope>SUBUNIT</scope>
</reference>
<proteinExistence type="evidence at protein level"/>
<protein>
    <recommendedName>
        <fullName>Inner kinetochore subunit MCM21</fullName>
    </recommendedName>
    <alternativeName>
        <fullName>CENP-O homolog</fullName>
    </alternativeName>
    <alternativeName>
        <fullName>Constitutive centromere-associated network protein MCM21</fullName>
    </alternativeName>
    <alternativeName>
        <fullName>Minichromosome maintenance protein 21</fullName>
    </alternativeName>
</protein>